<gene>
    <name type="ordered locus">cg2042</name>
    <name type="ordered locus">Cgl1822</name>
</gene>
<dbReference type="EMBL" id="BA000036">
    <property type="protein sequence ID" value="BAB99215.1"/>
    <property type="molecule type" value="Genomic_DNA"/>
</dbReference>
<dbReference type="EMBL" id="BX927153">
    <property type="protein sequence ID" value="CAF20201.1"/>
    <property type="molecule type" value="Genomic_DNA"/>
</dbReference>
<dbReference type="RefSeq" id="NP_601025.1">
    <property type="nucleotide sequence ID" value="NC_003450.3"/>
</dbReference>
<dbReference type="RefSeq" id="WP_011265822.1">
    <property type="nucleotide sequence ID" value="NC_003450.3"/>
</dbReference>
<dbReference type="STRING" id="196627.cg2042"/>
<dbReference type="GeneID" id="1019779"/>
<dbReference type="KEGG" id="cgb:cg2042"/>
<dbReference type="KEGG" id="cgl:Cgl1822"/>
<dbReference type="PATRIC" id="fig|196627.13.peg.1764"/>
<dbReference type="HOGENOM" id="CLU_996438_0_0_11"/>
<dbReference type="OrthoDB" id="4385401at2"/>
<dbReference type="BioCyc" id="CORYNE:G18NG-11414-MONOMER"/>
<dbReference type="BRENDA" id="2.4.2.47">
    <property type="organism ID" value="960"/>
</dbReference>
<dbReference type="Proteomes" id="UP000000582">
    <property type="component" value="Chromosome"/>
</dbReference>
<dbReference type="Proteomes" id="UP000001009">
    <property type="component" value="Chromosome"/>
</dbReference>
<dbReference type="NCBIfam" id="NF038186">
    <property type="entry name" value="YPDG_rpt"/>
    <property type="match status" value="1"/>
</dbReference>
<proteinExistence type="inferred from homology"/>
<sequence length="279" mass="29952">MLVQSRTLVTAILSCSLVFGTTVNGASVAIAQENVPMAALYEPDYESLETRLGSINNDAGLPNSVSQTVENFAELPEGTRFVLDSDTFAVAVSDGVVTSRLDSQTGVIRHTFGGAGTISYNPGEVTRSYIDRVTVRVVYPDSSIDIVTPHSVVEVSDSFYYSVQSIDSQRVRNGQSIKVPMTVIAGDGAIGGVPQGAKVVRDRYGSVEDAELMGATIVIDEKTGELTFTAPEDRTGQMWFAAELIYPDGTYSEVHYLFEVTDKSVQDDSVPFFGSSLSS</sequence>
<reference key="1">
    <citation type="journal article" date="2003" name="Appl. Microbiol. Biotechnol.">
        <title>The Corynebacterium glutamicum genome: features and impacts on biotechnological processes.</title>
        <authorList>
            <person name="Ikeda M."/>
            <person name="Nakagawa S."/>
        </authorList>
    </citation>
    <scope>NUCLEOTIDE SEQUENCE [LARGE SCALE GENOMIC DNA]</scope>
    <source>
        <strain>ATCC 13032 / DSM 20300 / JCM 1318 / BCRC 11384 / CCUG 27702 / LMG 3730 / NBRC 12168 / NCIMB 10025 / NRRL B-2784 / 534</strain>
    </source>
</reference>
<reference key="2">
    <citation type="journal article" date="2003" name="J. Biotechnol.">
        <title>The complete Corynebacterium glutamicum ATCC 13032 genome sequence and its impact on the production of L-aspartate-derived amino acids and vitamins.</title>
        <authorList>
            <person name="Kalinowski J."/>
            <person name="Bathe B."/>
            <person name="Bartels D."/>
            <person name="Bischoff N."/>
            <person name="Bott M."/>
            <person name="Burkovski A."/>
            <person name="Dusch N."/>
            <person name="Eggeling L."/>
            <person name="Eikmanns B.J."/>
            <person name="Gaigalat L."/>
            <person name="Goesmann A."/>
            <person name="Hartmann M."/>
            <person name="Huthmacher K."/>
            <person name="Kraemer R."/>
            <person name="Linke B."/>
            <person name="McHardy A.C."/>
            <person name="Meyer F."/>
            <person name="Moeckel B."/>
            <person name="Pfefferle W."/>
            <person name="Puehler A."/>
            <person name="Rey D.A."/>
            <person name="Rueckert C."/>
            <person name="Rupp O."/>
            <person name="Sahm H."/>
            <person name="Wendisch V.F."/>
            <person name="Wiegraebe I."/>
            <person name="Tauch A."/>
        </authorList>
    </citation>
    <scope>NUCLEOTIDE SEQUENCE [LARGE SCALE GENOMIC DNA]</scope>
    <source>
        <strain>ATCC 13032 / DSM 20300 / JCM 1318 / BCRC 11384 / CCUG 27702 / LMG 3730 / NBRC 12168 / NCIMB 10025 / NRRL B-2784 / 534</strain>
    </source>
</reference>
<evidence type="ECO:0000255" key="1"/>
<evidence type="ECO:0000305" key="2"/>
<accession>Q8NPJ0</accession>
<accession>Q6M4F8</accession>
<keyword id="KW-1185">Reference proteome</keyword>
<keyword id="KW-0732">Signal</keyword>
<name>Y1822_CORGL</name>
<protein>
    <recommendedName>
        <fullName evidence="2">Uncharacterized protein Cgl1822/cg2042</fullName>
    </recommendedName>
</protein>
<feature type="signal peptide" evidence="1">
    <location>
        <begin position="1"/>
        <end position="31"/>
    </location>
</feature>
<feature type="chain" id="PRO_0000420581" description="Uncharacterized protein Cgl1822/cg2042">
    <location>
        <begin position="32"/>
        <end position="279"/>
    </location>
</feature>
<organism>
    <name type="scientific">Corynebacterium glutamicum (strain ATCC 13032 / DSM 20300 / JCM 1318 / BCRC 11384 / CCUG 27702 / LMG 3730 / NBRC 12168 / NCIMB 10025 / NRRL B-2784 / 534)</name>
    <dbReference type="NCBI Taxonomy" id="196627"/>
    <lineage>
        <taxon>Bacteria</taxon>
        <taxon>Bacillati</taxon>
        <taxon>Actinomycetota</taxon>
        <taxon>Actinomycetes</taxon>
        <taxon>Mycobacteriales</taxon>
        <taxon>Corynebacteriaceae</taxon>
        <taxon>Corynebacterium</taxon>
    </lineage>
</organism>